<keyword id="KW-0028">Amino-acid biosynthesis</keyword>
<keyword id="KW-0057">Aromatic amino acid biosynthesis</keyword>
<keyword id="KW-0456">Lyase</keyword>
<keyword id="KW-0822">Tryptophan biosynthesis</keyword>
<sequence>MGVEKIKAAFENGKKAFIPYVMGGDGGLEKLKERIRFLDEAGASIVEIGIPFSDPVADGPTIQRAGKRALDSGVTVKGIFQALIEVRKEVQIPFVLMTYLNPVLAFGKEQFIENCIEAGVDGIIVPDLPYEEQDIIAPLLRTANIALIPLVTVTSPIERIEKITSESEGFVYAVTVAGVTGVRQNFKEEIHSYLEKVKSHTHLPVVAGFGISTKEHVEEMITICDGVVVGSKVIELLENEKREEICELIQATKQKEEA</sequence>
<gene>
    <name evidence="1" type="primary">trpA</name>
    <name type="ordered locus">BCE_1362</name>
</gene>
<name>TRPA_BACC1</name>
<feature type="chain" id="PRO_0000098733" description="Tryptophan synthase alpha chain">
    <location>
        <begin position="1"/>
        <end position="258"/>
    </location>
</feature>
<feature type="active site" description="Proton acceptor" evidence="1">
    <location>
        <position position="47"/>
    </location>
</feature>
<feature type="active site" description="Proton acceptor" evidence="1">
    <location>
        <position position="58"/>
    </location>
</feature>
<organism>
    <name type="scientific">Bacillus cereus (strain ATCC 10987 / NRS 248)</name>
    <dbReference type="NCBI Taxonomy" id="222523"/>
    <lineage>
        <taxon>Bacteria</taxon>
        <taxon>Bacillati</taxon>
        <taxon>Bacillota</taxon>
        <taxon>Bacilli</taxon>
        <taxon>Bacillales</taxon>
        <taxon>Bacillaceae</taxon>
        <taxon>Bacillus</taxon>
        <taxon>Bacillus cereus group</taxon>
    </lineage>
</organism>
<evidence type="ECO:0000255" key="1">
    <source>
        <dbReference type="HAMAP-Rule" id="MF_00131"/>
    </source>
</evidence>
<comment type="function">
    <text evidence="1">The alpha subunit is responsible for the aldol cleavage of indoleglycerol phosphate to indole and glyceraldehyde 3-phosphate.</text>
</comment>
<comment type="catalytic activity">
    <reaction evidence="1">
        <text>(1S,2R)-1-C-(indol-3-yl)glycerol 3-phosphate + L-serine = D-glyceraldehyde 3-phosphate + L-tryptophan + H2O</text>
        <dbReference type="Rhea" id="RHEA:10532"/>
        <dbReference type="ChEBI" id="CHEBI:15377"/>
        <dbReference type="ChEBI" id="CHEBI:33384"/>
        <dbReference type="ChEBI" id="CHEBI:57912"/>
        <dbReference type="ChEBI" id="CHEBI:58866"/>
        <dbReference type="ChEBI" id="CHEBI:59776"/>
        <dbReference type="EC" id="4.2.1.20"/>
    </reaction>
</comment>
<comment type="pathway">
    <text evidence="1">Amino-acid biosynthesis; L-tryptophan biosynthesis; L-tryptophan from chorismate: step 5/5.</text>
</comment>
<comment type="subunit">
    <text evidence="1">Tetramer of two alpha and two beta chains.</text>
</comment>
<comment type="similarity">
    <text evidence="1">Belongs to the TrpA family.</text>
</comment>
<reference key="1">
    <citation type="journal article" date="2004" name="Nucleic Acids Res.">
        <title>The genome sequence of Bacillus cereus ATCC 10987 reveals metabolic adaptations and a large plasmid related to Bacillus anthracis pXO1.</title>
        <authorList>
            <person name="Rasko D.A."/>
            <person name="Ravel J."/>
            <person name="Oekstad O.A."/>
            <person name="Helgason E."/>
            <person name="Cer R.Z."/>
            <person name="Jiang L."/>
            <person name="Shores K.A."/>
            <person name="Fouts D.E."/>
            <person name="Tourasse N.J."/>
            <person name="Angiuoli S.V."/>
            <person name="Kolonay J.F."/>
            <person name="Nelson W.C."/>
            <person name="Kolstoe A.-B."/>
            <person name="Fraser C.M."/>
            <person name="Read T.D."/>
        </authorList>
    </citation>
    <scope>NUCLEOTIDE SEQUENCE [LARGE SCALE GENOMIC DNA]</scope>
    <source>
        <strain>ATCC 10987 / NRS 248</strain>
    </source>
</reference>
<protein>
    <recommendedName>
        <fullName evidence="1">Tryptophan synthase alpha chain</fullName>
        <ecNumber evidence="1">4.2.1.20</ecNumber>
    </recommendedName>
</protein>
<proteinExistence type="inferred from homology"/>
<accession>Q73BQ6</accession>
<dbReference type="EC" id="4.2.1.20" evidence="1"/>
<dbReference type="EMBL" id="AE017194">
    <property type="protein sequence ID" value="AAS40291.1"/>
    <property type="molecule type" value="Genomic_DNA"/>
</dbReference>
<dbReference type="SMR" id="Q73BQ6"/>
<dbReference type="KEGG" id="bca:BCE_1362"/>
<dbReference type="HOGENOM" id="CLU_016734_0_0_9"/>
<dbReference type="UniPathway" id="UPA00035">
    <property type="reaction ID" value="UER00044"/>
</dbReference>
<dbReference type="Proteomes" id="UP000002527">
    <property type="component" value="Chromosome"/>
</dbReference>
<dbReference type="GO" id="GO:0005829">
    <property type="term" value="C:cytosol"/>
    <property type="evidence" value="ECO:0007669"/>
    <property type="project" value="TreeGrafter"/>
</dbReference>
<dbReference type="GO" id="GO:0004834">
    <property type="term" value="F:tryptophan synthase activity"/>
    <property type="evidence" value="ECO:0007669"/>
    <property type="project" value="UniProtKB-UniRule"/>
</dbReference>
<dbReference type="CDD" id="cd04724">
    <property type="entry name" value="Tryptophan_synthase_alpha"/>
    <property type="match status" value="1"/>
</dbReference>
<dbReference type="FunFam" id="3.20.20.70:FF:000037">
    <property type="entry name" value="Tryptophan synthase alpha chain"/>
    <property type="match status" value="1"/>
</dbReference>
<dbReference type="Gene3D" id="3.20.20.70">
    <property type="entry name" value="Aldolase class I"/>
    <property type="match status" value="1"/>
</dbReference>
<dbReference type="HAMAP" id="MF_00131">
    <property type="entry name" value="Trp_synth_alpha"/>
    <property type="match status" value="1"/>
</dbReference>
<dbReference type="InterPro" id="IPR013785">
    <property type="entry name" value="Aldolase_TIM"/>
</dbReference>
<dbReference type="InterPro" id="IPR011060">
    <property type="entry name" value="RibuloseP-bd_barrel"/>
</dbReference>
<dbReference type="InterPro" id="IPR018204">
    <property type="entry name" value="Trp_synthase_alpha_AS"/>
</dbReference>
<dbReference type="InterPro" id="IPR002028">
    <property type="entry name" value="Trp_synthase_suA"/>
</dbReference>
<dbReference type="NCBIfam" id="TIGR00262">
    <property type="entry name" value="trpA"/>
    <property type="match status" value="1"/>
</dbReference>
<dbReference type="PANTHER" id="PTHR43406:SF1">
    <property type="entry name" value="TRYPTOPHAN SYNTHASE ALPHA CHAIN, CHLOROPLASTIC"/>
    <property type="match status" value="1"/>
</dbReference>
<dbReference type="PANTHER" id="PTHR43406">
    <property type="entry name" value="TRYPTOPHAN SYNTHASE, ALPHA CHAIN"/>
    <property type="match status" value="1"/>
</dbReference>
<dbReference type="Pfam" id="PF00290">
    <property type="entry name" value="Trp_syntA"/>
    <property type="match status" value="1"/>
</dbReference>
<dbReference type="SUPFAM" id="SSF51366">
    <property type="entry name" value="Ribulose-phoshate binding barrel"/>
    <property type="match status" value="1"/>
</dbReference>
<dbReference type="PROSITE" id="PS00167">
    <property type="entry name" value="TRP_SYNTHASE_ALPHA"/>
    <property type="match status" value="1"/>
</dbReference>